<accession>A8MH81</accession>
<sequence>MLYPPINELLDKVDSRYTLVVAAAKRARQLIDGAVPKIEMPYSKKPVSIATQEIYESYVLYTSGEDETDIE</sequence>
<name>RPOZ_ALKOO</name>
<reference key="1">
    <citation type="submission" date="2007-10" db="EMBL/GenBank/DDBJ databases">
        <title>Complete genome of Alkaliphilus oremlandii OhILAs.</title>
        <authorList>
            <person name="Copeland A."/>
            <person name="Lucas S."/>
            <person name="Lapidus A."/>
            <person name="Barry K."/>
            <person name="Detter J.C."/>
            <person name="Glavina del Rio T."/>
            <person name="Hammon N."/>
            <person name="Israni S."/>
            <person name="Dalin E."/>
            <person name="Tice H."/>
            <person name="Pitluck S."/>
            <person name="Chain P."/>
            <person name="Malfatti S."/>
            <person name="Shin M."/>
            <person name="Vergez L."/>
            <person name="Schmutz J."/>
            <person name="Larimer F."/>
            <person name="Land M."/>
            <person name="Hauser L."/>
            <person name="Kyrpides N."/>
            <person name="Mikhailova N."/>
            <person name="Stolz J.F."/>
            <person name="Dawson A."/>
            <person name="Fisher E."/>
            <person name="Crable B."/>
            <person name="Perera E."/>
            <person name="Lisak J."/>
            <person name="Ranganathan M."/>
            <person name="Basu P."/>
            <person name="Richardson P."/>
        </authorList>
    </citation>
    <scope>NUCLEOTIDE SEQUENCE [LARGE SCALE GENOMIC DNA]</scope>
    <source>
        <strain>OhILAs</strain>
    </source>
</reference>
<proteinExistence type="inferred from homology"/>
<evidence type="ECO:0000255" key="1">
    <source>
        <dbReference type="HAMAP-Rule" id="MF_00366"/>
    </source>
</evidence>
<gene>
    <name evidence="1" type="primary">rpoZ</name>
    <name type="ordered locus">Clos_1424</name>
</gene>
<dbReference type="EC" id="2.7.7.6" evidence="1"/>
<dbReference type="EMBL" id="CP000853">
    <property type="protein sequence ID" value="ABW18968.1"/>
    <property type="molecule type" value="Genomic_DNA"/>
</dbReference>
<dbReference type="RefSeq" id="WP_012159280.1">
    <property type="nucleotide sequence ID" value="NC_009922.1"/>
</dbReference>
<dbReference type="SMR" id="A8MH81"/>
<dbReference type="STRING" id="350688.Clos_1424"/>
<dbReference type="KEGG" id="aoe:Clos_1424"/>
<dbReference type="eggNOG" id="COG1758">
    <property type="taxonomic scope" value="Bacteria"/>
</dbReference>
<dbReference type="HOGENOM" id="CLU_125406_6_1_9"/>
<dbReference type="OrthoDB" id="9815459at2"/>
<dbReference type="Proteomes" id="UP000000269">
    <property type="component" value="Chromosome"/>
</dbReference>
<dbReference type="GO" id="GO:0000428">
    <property type="term" value="C:DNA-directed RNA polymerase complex"/>
    <property type="evidence" value="ECO:0007669"/>
    <property type="project" value="UniProtKB-KW"/>
</dbReference>
<dbReference type="GO" id="GO:0003677">
    <property type="term" value="F:DNA binding"/>
    <property type="evidence" value="ECO:0007669"/>
    <property type="project" value="UniProtKB-UniRule"/>
</dbReference>
<dbReference type="GO" id="GO:0003899">
    <property type="term" value="F:DNA-directed RNA polymerase activity"/>
    <property type="evidence" value="ECO:0007669"/>
    <property type="project" value="UniProtKB-UniRule"/>
</dbReference>
<dbReference type="GO" id="GO:0006351">
    <property type="term" value="P:DNA-templated transcription"/>
    <property type="evidence" value="ECO:0007669"/>
    <property type="project" value="UniProtKB-UniRule"/>
</dbReference>
<dbReference type="Gene3D" id="3.90.940.10">
    <property type="match status" value="1"/>
</dbReference>
<dbReference type="HAMAP" id="MF_00366">
    <property type="entry name" value="RNApol_bact_RpoZ"/>
    <property type="match status" value="1"/>
</dbReference>
<dbReference type="InterPro" id="IPR003716">
    <property type="entry name" value="DNA-dir_RNA_pol_omega"/>
</dbReference>
<dbReference type="InterPro" id="IPR006110">
    <property type="entry name" value="Pol_omega/Rpo6/RPB6"/>
</dbReference>
<dbReference type="InterPro" id="IPR036161">
    <property type="entry name" value="RPB6/omega-like_sf"/>
</dbReference>
<dbReference type="NCBIfam" id="TIGR00690">
    <property type="entry name" value="rpoZ"/>
    <property type="match status" value="1"/>
</dbReference>
<dbReference type="PANTHER" id="PTHR34476">
    <property type="entry name" value="DNA-DIRECTED RNA POLYMERASE SUBUNIT OMEGA"/>
    <property type="match status" value="1"/>
</dbReference>
<dbReference type="PANTHER" id="PTHR34476:SF1">
    <property type="entry name" value="DNA-DIRECTED RNA POLYMERASE SUBUNIT OMEGA"/>
    <property type="match status" value="1"/>
</dbReference>
<dbReference type="Pfam" id="PF01192">
    <property type="entry name" value="RNA_pol_Rpb6"/>
    <property type="match status" value="1"/>
</dbReference>
<dbReference type="SMART" id="SM01409">
    <property type="entry name" value="RNA_pol_Rpb6"/>
    <property type="match status" value="1"/>
</dbReference>
<dbReference type="SUPFAM" id="SSF63562">
    <property type="entry name" value="RPB6/omega subunit-like"/>
    <property type="match status" value="1"/>
</dbReference>
<feature type="chain" id="PRO_1000059908" description="DNA-directed RNA polymerase subunit omega">
    <location>
        <begin position="1"/>
        <end position="71"/>
    </location>
</feature>
<comment type="function">
    <text evidence="1">Promotes RNA polymerase assembly. Latches the N- and C-terminal regions of the beta' subunit thereby facilitating its interaction with the beta and alpha subunits.</text>
</comment>
<comment type="catalytic activity">
    <reaction evidence="1">
        <text>RNA(n) + a ribonucleoside 5'-triphosphate = RNA(n+1) + diphosphate</text>
        <dbReference type="Rhea" id="RHEA:21248"/>
        <dbReference type="Rhea" id="RHEA-COMP:14527"/>
        <dbReference type="Rhea" id="RHEA-COMP:17342"/>
        <dbReference type="ChEBI" id="CHEBI:33019"/>
        <dbReference type="ChEBI" id="CHEBI:61557"/>
        <dbReference type="ChEBI" id="CHEBI:140395"/>
        <dbReference type="EC" id="2.7.7.6"/>
    </reaction>
</comment>
<comment type="subunit">
    <text evidence="1">The RNAP catalytic core consists of 2 alpha, 1 beta, 1 beta' and 1 omega subunit. When a sigma factor is associated with the core the holoenzyme is formed, which can initiate transcription.</text>
</comment>
<comment type="similarity">
    <text evidence="1">Belongs to the RNA polymerase subunit omega family.</text>
</comment>
<organism>
    <name type="scientific">Alkaliphilus oremlandii (strain OhILAs)</name>
    <name type="common">Clostridium oremlandii (strain OhILAs)</name>
    <dbReference type="NCBI Taxonomy" id="350688"/>
    <lineage>
        <taxon>Bacteria</taxon>
        <taxon>Bacillati</taxon>
        <taxon>Bacillota</taxon>
        <taxon>Clostridia</taxon>
        <taxon>Peptostreptococcales</taxon>
        <taxon>Natronincolaceae</taxon>
        <taxon>Alkaliphilus</taxon>
    </lineage>
</organism>
<keyword id="KW-0240">DNA-directed RNA polymerase</keyword>
<keyword id="KW-0548">Nucleotidyltransferase</keyword>
<keyword id="KW-1185">Reference proteome</keyword>
<keyword id="KW-0804">Transcription</keyword>
<keyword id="KW-0808">Transferase</keyword>
<protein>
    <recommendedName>
        <fullName evidence="1">DNA-directed RNA polymerase subunit omega</fullName>
        <shortName evidence="1">RNAP omega subunit</shortName>
        <ecNumber evidence="1">2.7.7.6</ecNumber>
    </recommendedName>
    <alternativeName>
        <fullName evidence="1">RNA polymerase omega subunit</fullName>
    </alternativeName>
    <alternativeName>
        <fullName evidence="1">Transcriptase subunit omega</fullName>
    </alternativeName>
</protein>